<name>NGDN_HUMAN</name>
<feature type="initiator methionine" description="Removed" evidence="11">
    <location>
        <position position="1"/>
    </location>
</feature>
<feature type="chain" id="PRO_0000114331" description="Neuroguidin">
    <location>
        <begin position="2"/>
        <end position="315"/>
    </location>
</feature>
<feature type="region of interest" description="Necessary for interaction with EIF4E" evidence="1">
    <location>
        <begin position="41"/>
        <end position="174"/>
    </location>
</feature>
<feature type="region of interest" description="Disordered" evidence="4">
    <location>
        <begin position="124"/>
        <end position="169"/>
    </location>
</feature>
<feature type="region of interest" description="Disordered" evidence="4">
    <location>
        <begin position="277"/>
        <end position="315"/>
    </location>
</feature>
<feature type="coiled-coil region" evidence="3">
    <location>
        <begin position="13"/>
        <end position="41"/>
    </location>
</feature>
<feature type="coiled-coil region" evidence="3">
    <location>
        <begin position="181"/>
        <end position="205"/>
    </location>
</feature>
<feature type="compositionally biased region" description="Acidic residues" evidence="4">
    <location>
        <begin position="144"/>
        <end position="156"/>
    </location>
</feature>
<feature type="compositionally biased region" description="Basic residues" evidence="4">
    <location>
        <begin position="295"/>
        <end position="315"/>
    </location>
</feature>
<feature type="modified residue" description="N-acetylalanine" evidence="11">
    <location>
        <position position="2"/>
    </location>
</feature>
<feature type="modified residue" description="Phosphoserine" evidence="13">
    <location>
        <position position="121"/>
    </location>
</feature>
<feature type="modified residue" description="Phosphoserine" evidence="12 13">
    <location>
        <position position="142"/>
    </location>
</feature>
<feature type="modified residue" description="Phosphoserine" evidence="12 13">
    <location>
        <position position="143"/>
    </location>
</feature>
<feature type="modified residue" description="Phosphoserine" evidence="13">
    <location>
        <position position="204"/>
    </location>
</feature>
<feature type="modified residue" description="Phosphoserine" evidence="13">
    <location>
        <position position="214"/>
    </location>
</feature>
<feature type="splice variant" id="VSP_009935" description="In isoform 2." evidence="7">
    <original>F</original>
    <variation>Q</variation>
    <location>
        <position position="311"/>
    </location>
</feature>
<feature type="splice variant" id="VSP_009936" description="In isoform 2." evidence="7">
    <location>
        <begin position="312"/>
        <end position="315"/>
    </location>
</feature>
<feature type="sequence variant" id="VAR_051898" description="In dbSNP:rs10149626.">
    <original>V</original>
    <variation>L</variation>
    <location>
        <position position="15"/>
    </location>
</feature>
<feature type="sequence variant" id="VAR_051899" description="In dbSNP:rs17093050.">
    <original>K</original>
    <variation>I</variation>
    <location>
        <position position="308"/>
    </location>
</feature>
<gene>
    <name evidence="9" type="primary">NGDN</name>
    <name type="synonym">C14orf120</name>
</gene>
<proteinExistence type="evidence at protein level"/>
<organism>
    <name type="scientific">Homo sapiens</name>
    <name type="common">Human</name>
    <dbReference type="NCBI Taxonomy" id="9606"/>
    <lineage>
        <taxon>Eukaryota</taxon>
        <taxon>Metazoa</taxon>
        <taxon>Chordata</taxon>
        <taxon>Craniata</taxon>
        <taxon>Vertebrata</taxon>
        <taxon>Euteleostomi</taxon>
        <taxon>Mammalia</taxon>
        <taxon>Eutheria</taxon>
        <taxon>Euarchontoglires</taxon>
        <taxon>Primates</taxon>
        <taxon>Haplorrhini</taxon>
        <taxon>Catarrhini</taxon>
        <taxon>Hominidae</taxon>
        <taxon>Homo</taxon>
    </lineage>
</organism>
<reference key="1">
    <citation type="journal article" date="2004" name="Nat. Genet.">
        <title>Complete sequencing and characterization of 21,243 full-length human cDNAs.</title>
        <authorList>
            <person name="Ota T."/>
            <person name="Suzuki Y."/>
            <person name="Nishikawa T."/>
            <person name="Otsuki T."/>
            <person name="Sugiyama T."/>
            <person name="Irie R."/>
            <person name="Wakamatsu A."/>
            <person name="Hayashi K."/>
            <person name="Sato H."/>
            <person name="Nagai K."/>
            <person name="Kimura K."/>
            <person name="Makita H."/>
            <person name="Sekine M."/>
            <person name="Obayashi M."/>
            <person name="Nishi T."/>
            <person name="Shibahara T."/>
            <person name="Tanaka T."/>
            <person name="Ishii S."/>
            <person name="Yamamoto J."/>
            <person name="Saito K."/>
            <person name="Kawai Y."/>
            <person name="Isono Y."/>
            <person name="Nakamura Y."/>
            <person name="Nagahari K."/>
            <person name="Murakami K."/>
            <person name="Yasuda T."/>
            <person name="Iwayanagi T."/>
            <person name="Wagatsuma M."/>
            <person name="Shiratori A."/>
            <person name="Sudo H."/>
            <person name="Hosoiri T."/>
            <person name="Kaku Y."/>
            <person name="Kodaira H."/>
            <person name="Kondo H."/>
            <person name="Sugawara M."/>
            <person name="Takahashi M."/>
            <person name="Kanda K."/>
            <person name="Yokoi T."/>
            <person name="Furuya T."/>
            <person name="Kikkawa E."/>
            <person name="Omura Y."/>
            <person name="Abe K."/>
            <person name="Kamihara K."/>
            <person name="Katsuta N."/>
            <person name="Sato K."/>
            <person name="Tanikawa M."/>
            <person name="Yamazaki M."/>
            <person name="Ninomiya K."/>
            <person name="Ishibashi T."/>
            <person name="Yamashita H."/>
            <person name="Murakawa K."/>
            <person name="Fujimori K."/>
            <person name="Tanai H."/>
            <person name="Kimata M."/>
            <person name="Watanabe M."/>
            <person name="Hiraoka S."/>
            <person name="Chiba Y."/>
            <person name="Ishida S."/>
            <person name="Ono Y."/>
            <person name="Takiguchi S."/>
            <person name="Watanabe S."/>
            <person name="Yosida M."/>
            <person name="Hotuta T."/>
            <person name="Kusano J."/>
            <person name="Kanehori K."/>
            <person name="Takahashi-Fujii A."/>
            <person name="Hara H."/>
            <person name="Tanase T.-O."/>
            <person name="Nomura Y."/>
            <person name="Togiya S."/>
            <person name="Komai F."/>
            <person name="Hara R."/>
            <person name="Takeuchi K."/>
            <person name="Arita M."/>
            <person name="Imose N."/>
            <person name="Musashino K."/>
            <person name="Yuuki H."/>
            <person name="Oshima A."/>
            <person name="Sasaki N."/>
            <person name="Aotsuka S."/>
            <person name="Yoshikawa Y."/>
            <person name="Matsunawa H."/>
            <person name="Ichihara T."/>
            <person name="Shiohata N."/>
            <person name="Sano S."/>
            <person name="Moriya S."/>
            <person name="Momiyama H."/>
            <person name="Satoh N."/>
            <person name="Takami S."/>
            <person name="Terashima Y."/>
            <person name="Suzuki O."/>
            <person name="Nakagawa S."/>
            <person name="Senoh A."/>
            <person name="Mizoguchi H."/>
            <person name="Goto Y."/>
            <person name="Shimizu F."/>
            <person name="Wakebe H."/>
            <person name="Hishigaki H."/>
            <person name="Watanabe T."/>
            <person name="Sugiyama A."/>
            <person name="Takemoto M."/>
            <person name="Kawakami B."/>
            <person name="Yamazaki M."/>
            <person name="Watanabe K."/>
            <person name="Kumagai A."/>
            <person name="Itakura S."/>
            <person name="Fukuzumi Y."/>
            <person name="Fujimori Y."/>
            <person name="Komiyama M."/>
            <person name="Tashiro H."/>
            <person name="Tanigami A."/>
            <person name="Fujiwara T."/>
            <person name="Ono T."/>
            <person name="Yamada K."/>
            <person name="Fujii Y."/>
            <person name="Ozaki K."/>
            <person name="Hirao M."/>
            <person name="Ohmori Y."/>
            <person name="Kawabata A."/>
            <person name="Hikiji T."/>
            <person name="Kobatake N."/>
            <person name="Inagaki H."/>
            <person name="Ikema Y."/>
            <person name="Okamoto S."/>
            <person name="Okitani R."/>
            <person name="Kawakami T."/>
            <person name="Noguchi S."/>
            <person name="Itoh T."/>
            <person name="Shigeta K."/>
            <person name="Senba T."/>
            <person name="Matsumura K."/>
            <person name="Nakajima Y."/>
            <person name="Mizuno T."/>
            <person name="Morinaga M."/>
            <person name="Sasaki M."/>
            <person name="Togashi T."/>
            <person name="Oyama M."/>
            <person name="Hata H."/>
            <person name="Watanabe M."/>
            <person name="Komatsu T."/>
            <person name="Mizushima-Sugano J."/>
            <person name="Satoh T."/>
            <person name="Shirai Y."/>
            <person name="Takahashi Y."/>
            <person name="Nakagawa K."/>
            <person name="Okumura K."/>
            <person name="Nagase T."/>
            <person name="Nomura N."/>
            <person name="Kikuchi H."/>
            <person name="Masuho Y."/>
            <person name="Yamashita R."/>
            <person name="Nakai K."/>
            <person name="Yada T."/>
            <person name="Nakamura Y."/>
            <person name="Ohara O."/>
            <person name="Isogai T."/>
            <person name="Sugano S."/>
        </authorList>
    </citation>
    <scope>NUCLEOTIDE SEQUENCE [LARGE SCALE MRNA] (ISOFORM 1)</scope>
    <source>
        <tissue>Skeletal muscle</tissue>
    </source>
</reference>
<reference key="2">
    <citation type="journal article" date="2007" name="BMC Genomics">
        <title>The full-ORF clone resource of the German cDNA consortium.</title>
        <authorList>
            <person name="Bechtel S."/>
            <person name="Rosenfelder H."/>
            <person name="Duda A."/>
            <person name="Schmidt C.P."/>
            <person name="Ernst U."/>
            <person name="Wellenreuther R."/>
            <person name="Mehrle A."/>
            <person name="Schuster C."/>
            <person name="Bahr A."/>
            <person name="Bloecker H."/>
            <person name="Heubner D."/>
            <person name="Hoerlein A."/>
            <person name="Michel G."/>
            <person name="Wedler H."/>
            <person name="Koehrer K."/>
            <person name="Ottenwaelder B."/>
            <person name="Poustka A."/>
            <person name="Wiemann S."/>
            <person name="Schupp I."/>
        </authorList>
    </citation>
    <scope>NUCLEOTIDE SEQUENCE [LARGE SCALE MRNA] (ISOFORM 2)</scope>
    <source>
        <tissue>Brain</tissue>
    </source>
</reference>
<reference key="3">
    <citation type="submission" date="2005-09" db="EMBL/GenBank/DDBJ databases">
        <authorList>
            <person name="Mural R.J."/>
            <person name="Istrail S."/>
            <person name="Sutton G.G."/>
            <person name="Florea L."/>
            <person name="Halpern A.L."/>
            <person name="Mobarry C.M."/>
            <person name="Lippert R."/>
            <person name="Walenz B."/>
            <person name="Shatkay H."/>
            <person name="Dew I."/>
            <person name="Miller J.R."/>
            <person name="Flanigan M.J."/>
            <person name="Edwards N.J."/>
            <person name="Bolanos R."/>
            <person name="Fasulo D."/>
            <person name="Halldorsson B.V."/>
            <person name="Hannenhalli S."/>
            <person name="Turner R."/>
            <person name="Yooseph S."/>
            <person name="Lu F."/>
            <person name="Nusskern D.R."/>
            <person name="Shue B.C."/>
            <person name="Zheng X.H."/>
            <person name="Zhong F."/>
            <person name="Delcher A.L."/>
            <person name="Huson D.H."/>
            <person name="Kravitz S.A."/>
            <person name="Mouchard L."/>
            <person name="Reinert K."/>
            <person name="Remington K.A."/>
            <person name="Clark A.G."/>
            <person name="Waterman M.S."/>
            <person name="Eichler E.E."/>
            <person name="Adams M.D."/>
            <person name="Hunkapiller M.W."/>
            <person name="Myers E.W."/>
            <person name="Venter J.C."/>
        </authorList>
    </citation>
    <scope>NUCLEOTIDE SEQUENCE [LARGE SCALE GENOMIC DNA]</scope>
</reference>
<reference key="4">
    <citation type="journal article" date="2004" name="Genome Res.">
        <title>The status, quality, and expansion of the NIH full-length cDNA project: the Mammalian Gene Collection (MGC).</title>
        <authorList>
            <consortium name="The MGC Project Team"/>
        </authorList>
    </citation>
    <scope>NUCLEOTIDE SEQUENCE [LARGE SCALE MRNA] (ISOFORM 1)</scope>
    <source>
        <tissue>Placenta</tissue>
    </source>
</reference>
<reference key="5">
    <citation type="journal article" date="2008" name="Genes Cells">
        <title>CANu1, a novel nucleolar protein, accumulated on centromere in response to DNA damage.</title>
        <authorList>
            <person name="Sihn C.R."/>
            <person name="Lee Y.S."/>
            <person name="Jeong J.S."/>
            <person name="Park K."/>
            <person name="Kim S.H."/>
        </authorList>
    </citation>
    <scope>SUBCELLULAR LOCATION</scope>
</reference>
<reference key="6">
    <citation type="journal article" date="2008" name="Proc. Natl. Acad. Sci. U.S.A.">
        <title>A quantitative atlas of mitotic phosphorylation.</title>
        <authorList>
            <person name="Dephoure N."/>
            <person name="Zhou C."/>
            <person name="Villen J."/>
            <person name="Beausoleil S.A."/>
            <person name="Bakalarski C.E."/>
            <person name="Elledge S.J."/>
            <person name="Gygi S.P."/>
        </authorList>
    </citation>
    <scope>IDENTIFICATION BY MASS SPECTROMETRY [LARGE SCALE ANALYSIS]</scope>
    <source>
        <tissue>Cervix carcinoma</tissue>
    </source>
</reference>
<reference key="7">
    <citation type="journal article" date="2009" name="Anal. Chem.">
        <title>Lys-N and trypsin cover complementary parts of the phosphoproteome in a refined SCX-based approach.</title>
        <authorList>
            <person name="Gauci S."/>
            <person name="Helbig A.O."/>
            <person name="Slijper M."/>
            <person name="Krijgsveld J."/>
            <person name="Heck A.J."/>
            <person name="Mohammed S."/>
        </authorList>
    </citation>
    <scope>ACETYLATION [LARGE SCALE ANALYSIS] AT ALA-2</scope>
    <scope>CLEAVAGE OF INITIATOR METHIONINE [LARGE SCALE ANALYSIS]</scope>
    <scope>IDENTIFICATION BY MASS SPECTROMETRY [LARGE SCALE ANALYSIS]</scope>
</reference>
<reference key="8">
    <citation type="journal article" date="2010" name="Sci. Signal.">
        <title>Quantitative phosphoproteomics reveals widespread full phosphorylation site occupancy during mitosis.</title>
        <authorList>
            <person name="Olsen J.V."/>
            <person name="Vermeulen M."/>
            <person name="Santamaria A."/>
            <person name="Kumar C."/>
            <person name="Miller M.L."/>
            <person name="Jensen L.J."/>
            <person name="Gnad F."/>
            <person name="Cox J."/>
            <person name="Jensen T.S."/>
            <person name="Nigg E.A."/>
            <person name="Brunak S."/>
            <person name="Mann M."/>
        </authorList>
    </citation>
    <scope>IDENTIFICATION BY MASS SPECTROMETRY [LARGE SCALE ANALYSIS]</scope>
    <source>
        <tissue>Cervix carcinoma</tissue>
    </source>
</reference>
<reference key="9">
    <citation type="journal article" date="2011" name="Sci. Signal.">
        <title>System-wide temporal characterization of the proteome and phosphoproteome of human embryonic stem cell differentiation.</title>
        <authorList>
            <person name="Rigbolt K.T."/>
            <person name="Prokhorova T.A."/>
            <person name="Akimov V."/>
            <person name="Henningsen J."/>
            <person name="Johansen P.T."/>
            <person name="Kratchmarova I."/>
            <person name="Kassem M."/>
            <person name="Mann M."/>
            <person name="Olsen J.V."/>
            <person name="Blagoev B."/>
        </authorList>
    </citation>
    <scope>PHOSPHORYLATION [LARGE SCALE ANALYSIS] AT SER-142 AND SER-143</scope>
    <scope>IDENTIFICATION BY MASS SPECTROMETRY [LARGE SCALE ANALYSIS]</scope>
</reference>
<reference key="10">
    <citation type="journal article" date="2013" name="J. Proteome Res.">
        <title>Toward a comprehensive characterization of a human cancer cell phosphoproteome.</title>
        <authorList>
            <person name="Zhou H."/>
            <person name="Di Palma S."/>
            <person name="Preisinger C."/>
            <person name="Peng M."/>
            <person name="Polat A.N."/>
            <person name="Heck A.J."/>
            <person name="Mohammed S."/>
        </authorList>
    </citation>
    <scope>PHOSPHORYLATION [LARGE SCALE ANALYSIS] AT SER-121; SER-142; SER-143; SER-204 AND SER-214</scope>
    <scope>IDENTIFICATION BY MASS SPECTROMETRY [LARGE SCALE ANALYSIS]</scope>
    <source>
        <tissue>Cervix carcinoma</tissue>
        <tissue>Erythroleukemia</tissue>
    </source>
</reference>
<reference evidence="10" key="11">
    <citation type="journal article" date="2021" name="Science">
        <title>Nucleolar maturation of the human small subunit processome.</title>
        <authorList>
            <person name="Singh S."/>
            <person name="Vanden Broeck A."/>
            <person name="Miller L."/>
            <person name="Chaker-Margot M."/>
            <person name="Klinge S."/>
        </authorList>
    </citation>
    <scope>STRUCTURE BY ELECTRON MICROSCOPY (2.70 ANGSTROMS)</scope>
    <scope>FUNCTION</scope>
    <scope>SUBCELLULAR LOCATION</scope>
    <scope>SUBUNIT</scope>
</reference>
<evidence type="ECO:0000250" key="1"/>
<evidence type="ECO:0000250" key="2">
    <source>
        <dbReference type="UniProtKB" id="Q9DB96"/>
    </source>
</evidence>
<evidence type="ECO:0000255" key="3"/>
<evidence type="ECO:0000256" key="4">
    <source>
        <dbReference type="SAM" id="MobiDB-lite"/>
    </source>
</evidence>
<evidence type="ECO:0000269" key="5">
    <source>
    </source>
</evidence>
<evidence type="ECO:0000269" key="6">
    <source>
    </source>
</evidence>
<evidence type="ECO:0000303" key="7">
    <source>
    </source>
</evidence>
<evidence type="ECO:0000305" key="8"/>
<evidence type="ECO:0000312" key="9">
    <source>
        <dbReference type="HGNC" id="HGNC:20271"/>
    </source>
</evidence>
<evidence type="ECO:0007744" key="10">
    <source>
        <dbReference type="PDB" id="7MQ8"/>
    </source>
</evidence>
<evidence type="ECO:0007744" key="11">
    <source>
    </source>
</evidence>
<evidence type="ECO:0007744" key="12">
    <source>
    </source>
</evidence>
<evidence type="ECO:0007744" key="13">
    <source>
    </source>
</evidence>
<protein>
    <recommendedName>
        <fullName>Neuroguidin</fullName>
    </recommendedName>
    <alternativeName>
        <fullName>Centromere accumulated nuclear protein 1</fullName>
        <shortName>CANu1</shortName>
    </alternativeName>
    <alternativeName>
        <fullName>EIF4E-binding protein</fullName>
    </alternativeName>
</protein>
<comment type="function">
    <text evidence="2 6">Part of the small subunit (SSU) processome, first precursor of the small eukaryotic ribosomal subunit. During the assembly of the SSU processome in the nucleolus, many ribosome biogenesis factors, an RNA chaperone and ribosomal proteins associate with the nascent pre-rRNA and work in concert to generate RNA folding, modifications, rearrangements and cleavage as well as targeted degradation of pre-ribosomal RNA by the RNA exosome. Its dissociation from the complex determines the transition from state pre-A1 to state pre-A1* (PubMed:34516797). Inhibits mRNA translation in a cytoplasmic polyadenylation element (CPE)-dependent manner (By similarity).</text>
</comment>
<comment type="subunit">
    <text evidence="2 6">Part of the small subunit (SSU) processome, composed of more than 70 proteins and the RNA chaperone small nucleolar RNA (snoRNA) U3 (PubMed:34516797). Interacts with CPEB1 and EIF4E (By similarity).</text>
</comment>
<comment type="interaction">
    <interactant intactId="EBI-9995414">
        <id>Q8NEJ9</id>
    </interactant>
    <interactant intactId="EBI-372428">
        <id>Q9NY61</id>
        <label>AATF</label>
    </interactant>
    <organismsDiffer>false</organismsDiffer>
    <experiments>6</experiments>
</comment>
<comment type="interaction">
    <interactant intactId="EBI-9995414">
        <id>Q8NEJ9</id>
    </interactant>
    <interactant intactId="EBI-348169">
        <id>P67870</id>
        <label>CSNK2B</label>
    </interactant>
    <organismsDiffer>false</organismsDiffer>
    <experiments>3</experiments>
</comment>
<comment type="interaction">
    <interactant intactId="EBI-9995414">
        <id>Q8NEJ9</id>
    </interactant>
    <interactant intactId="EBI-1048159">
        <id>P55081</id>
        <label>MFAP1</label>
    </interactant>
    <organismsDiffer>false</organismsDiffer>
    <experiments>3</experiments>
</comment>
<comment type="interaction">
    <interactant intactId="EBI-9995414">
        <id>Q8NEJ9</id>
    </interactant>
    <interactant intactId="EBI-2685618">
        <id>Q5C9Z4</id>
        <label>NOM1</label>
    </interactant>
    <organismsDiffer>false</organismsDiffer>
    <experiments>3</experiments>
</comment>
<comment type="interaction">
    <interactant intactId="EBI-9995414">
        <id>Q8NEJ9</id>
    </interactant>
    <interactant intactId="EBI-20625235">
        <id>A0A142I5B9</id>
    </interactant>
    <organismsDiffer>true</organismsDiffer>
    <experiments>2</experiments>
</comment>
<comment type="subcellular location">
    <subcellularLocation>
        <location evidence="2">Nucleus</location>
    </subcellularLocation>
    <subcellularLocation>
        <location evidence="5 6">Nucleus</location>
        <location evidence="5 6">Nucleolus</location>
    </subcellularLocation>
    <subcellularLocation>
        <location evidence="5">Chromosome</location>
        <location evidence="5">Centromere</location>
    </subcellularLocation>
    <subcellularLocation>
        <location evidence="2">Cytoplasm</location>
    </subcellularLocation>
    <subcellularLocation>
        <location evidence="2">Cell projection</location>
        <location evidence="2">Axon</location>
    </subcellularLocation>
    <subcellularLocation>
        <location evidence="2">Cell projection</location>
        <location evidence="2">Dendrite</location>
    </subcellularLocation>
    <subcellularLocation>
        <location evidence="2">Cell projection</location>
        <location evidence="2">Filopodium</location>
    </subcellularLocation>
    <text evidence="2">Translocated from nucleolus to nuclear foci in response to UV damage (By similarity). Detected in axons, dendrites and filopodia. Colocalized with EIF4E in neurites.</text>
</comment>
<comment type="alternative products">
    <event type="alternative splicing"/>
    <isoform>
        <id>Q8NEJ9-1</id>
        <name>1</name>
        <sequence type="displayed"/>
    </isoform>
    <isoform>
        <id>Q8NEJ9-2</id>
        <name>2</name>
        <sequence type="described" ref="VSP_009935 VSP_009936"/>
    </isoform>
</comment>
<comment type="miscellaneous">
    <molecule>Isoform 2</molecule>
    <text evidence="8">May be due to a competing donor splice site.</text>
</comment>
<comment type="similarity">
    <text evidence="8">Belongs to the SAS10 family.</text>
</comment>
<accession>Q8NEJ9</accession>
<accession>A8K760</accession>
<accession>Q9Y400</accession>
<sequence>MAALGVLESDLPSAVTLLKNLQEQVMAVTAQVKSLTQKVQAGAYPTEKGLSFLEVKDQLLLMYLMDLTHLILDKASGGSLQGHDAVLRLVEIRTVLEKLRPLDQKLKYQIDKLIKTAVTGSLSENDPLRFKPHPSNMMSKLSSEDEEEDEAEDDQSEASGKKSVKGVSKKYVPPRLVPVHYDETEAEREKKRLERAKRRALSSSVIRELKEQYSDAPEEIRDARHPHVTRQSQEDQHRINYEESMMVRLSVSKREKGRRKRANVMSSQLHSLTHFSDISALTGGTVHLDEDQNPIKKRKKIPQKGRKKKGFRRRR</sequence>
<keyword id="KW-0002">3D-structure</keyword>
<keyword id="KW-0007">Acetylation</keyword>
<keyword id="KW-0025">Alternative splicing</keyword>
<keyword id="KW-0966">Cell projection</keyword>
<keyword id="KW-0137">Centromere</keyword>
<keyword id="KW-0158">Chromosome</keyword>
<keyword id="KW-0175">Coiled coil</keyword>
<keyword id="KW-0963">Cytoplasm</keyword>
<keyword id="KW-0539">Nucleus</keyword>
<keyword id="KW-0597">Phosphoprotein</keyword>
<keyword id="KW-1267">Proteomics identification</keyword>
<keyword id="KW-1185">Reference proteome</keyword>
<keyword id="KW-0678">Repressor</keyword>
<keyword id="KW-0810">Translation regulation</keyword>
<dbReference type="EMBL" id="AK291875">
    <property type="protein sequence ID" value="BAF84564.1"/>
    <property type="molecule type" value="mRNA"/>
</dbReference>
<dbReference type="EMBL" id="AL050003">
    <property type="protein sequence ID" value="CAB43232.2"/>
    <property type="molecule type" value="mRNA"/>
</dbReference>
<dbReference type="EMBL" id="CH471078">
    <property type="protein sequence ID" value="EAW66149.1"/>
    <property type="molecule type" value="Genomic_DNA"/>
</dbReference>
<dbReference type="EMBL" id="BC030817">
    <property type="protein sequence ID" value="AAH30817.1"/>
    <property type="molecule type" value="mRNA"/>
</dbReference>
<dbReference type="CCDS" id="CCDS32051.1">
    <molecule id="Q8NEJ9-2"/>
</dbReference>
<dbReference type="CCDS" id="CCDS41926.1">
    <molecule id="Q8NEJ9-1"/>
</dbReference>
<dbReference type="PIR" id="T08694">
    <property type="entry name" value="T08694"/>
</dbReference>
<dbReference type="RefSeq" id="NP_001036100.1">
    <molecule id="Q8NEJ9-1"/>
    <property type="nucleotide sequence ID" value="NM_001042635.2"/>
</dbReference>
<dbReference type="RefSeq" id="NP_056329.1">
    <molecule id="Q8NEJ9-2"/>
    <property type="nucleotide sequence ID" value="NM_015514.2"/>
</dbReference>
<dbReference type="PDB" id="7MQ8">
    <property type="method" value="EM"/>
    <property type="resolution" value="3.60 A"/>
    <property type="chains" value="NC=1-315"/>
</dbReference>
<dbReference type="PDBsum" id="7MQ8"/>
<dbReference type="EMDB" id="EMD-23936"/>
<dbReference type="SMR" id="Q8NEJ9"/>
<dbReference type="BioGRID" id="117466">
    <property type="interactions" value="133"/>
</dbReference>
<dbReference type="ComplexPortal" id="CPX-2511">
    <property type="entry name" value="Small ribosomal subunit processome"/>
</dbReference>
<dbReference type="CORUM" id="Q8NEJ9"/>
<dbReference type="FunCoup" id="Q8NEJ9">
    <property type="interactions" value="3676"/>
</dbReference>
<dbReference type="IntAct" id="Q8NEJ9">
    <property type="interactions" value="83"/>
</dbReference>
<dbReference type="MINT" id="Q8NEJ9"/>
<dbReference type="STRING" id="9606.ENSP00000386134"/>
<dbReference type="GlyGen" id="Q8NEJ9">
    <property type="glycosylation" value="1 site, 1 O-linked glycan (1 site)"/>
</dbReference>
<dbReference type="iPTMnet" id="Q8NEJ9"/>
<dbReference type="PhosphoSitePlus" id="Q8NEJ9"/>
<dbReference type="BioMuta" id="NGDN"/>
<dbReference type="DMDM" id="46395905"/>
<dbReference type="jPOST" id="Q8NEJ9"/>
<dbReference type="MassIVE" id="Q8NEJ9"/>
<dbReference type="PaxDb" id="9606-ENSP00000386134"/>
<dbReference type="PeptideAtlas" id="Q8NEJ9"/>
<dbReference type="ProteomicsDB" id="73169">
    <molecule id="Q8NEJ9-1"/>
</dbReference>
<dbReference type="ProteomicsDB" id="73170">
    <molecule id="Q8NEJ9-2"/>
</dbReference>
<dbReference type="Pumba" id="Q8NEJ9"/>
<dbReference type="TopDownProteomics" id="Q8NEJ9-1">
    <molecule id="Q8NEJ9-1"/>
</dbReference>
<dbReference type="Antibodypedia" id="89">
    <property type="antibodies" value="170 antibodies from 26 providers"/>
</dbReference>
<dbReference type="DNASU" id="25983"/>
<dbReference type="Ensembl" id="ENST00000397154.7">
    <molecule id="Q8NEJ9-2"/>
    <property type="protein sequence ID" value="ENSP00000380340.3"/>
    <property type="gene ID" value="ENSG00000129460.17"/>
</dbReference>
<dbReference type="Ensembl" id="ENST00000408901.8">
    <molecule id="Q8NEJ9-1"/>
    <property type="protein sequence ID" value="ENSP00000386134.3"/>
    <property type="gene ID" value="ENSG00000129460.17"/>
</dbReference>
<dbReference type="GeneID" id="25983"/>
<dbReference type="KEGG" id="hsa:25983"/>
<dbReference type="MANE-Select" id="ENST00000408901.8">
    <property type="protein sequence ID" value="ENSP00000386134.3"/>
    <property type="RefSeq nucleotide sequence ID" value="NM_001042635.2"/>
    <property type="RefSeq protein sequence ID" value="NP_001036100.1"/>
</dbReference>
<dbReference type="UCSC" id="uc001wjy.4">
    <molecule id="Q8NEJ9-1"/>
    <property type="organism name" value="human"/>
</dbReference>
<dbReference type="AGR" id="HGNC:20271"/>
<dbReference type="CTD" id="25983"/>
<dbReference type="DisGeNET" id="25983"/>
<dbReference type="GeneCards" id="NGDN"/>
<dbReference type="HGNC" id="HGNC:20271">
    <property type="gene designation" value="NGDN"/>
</dbReference>
<dbReference type="HPA" id="ENSG00000129460">
    <property type="expression patterns" value="Low tissue specificity"/>
</dbReference>
<dbReference type="MIM" id="610777">
    <property type="type" value="gene"/>
</dbReference>
<dbReference type="neXtProt" id="NX_Q8NEJ9"/>
<dbReference type="OpenTargets" id="ENSG00000129460"/>
<dbReference type="PharmGKB" id="PA134957933"/>
<dbReference type="VEuPathDB" id="HostDB:ENSG00000129460"/>
<dbReference type="eggNOG" id="KOG3117">
    <property type="taxonomic scope" value="Eukaryota"/>
</dbReference>
<dbReference type="GeneTree" id="ENSGT00500000044922"/>
<dbReference type="HOGENOM" id="CLU_031901_0_0_1"/>
<dbReference type="InParanoid" id="Q8NEJ9"/>
<dbReference type="OMA" id="PVHYNET"/>
<dbReference type="OrthoDB" id="203440at2759"/>
<dbReference type="PAN-GO" id="Q8NEJ9">
    <property type="GO annotations" value="3 GO annotations based on evolutionary models"/>
</dbReference>
<dbReference type="PhylomeDB" id="Q8NEJ9"/>
<dbReference type="TreeFam" id="TF313713"/>
<dbReference type="PathwayCommons" id="Q8NEJ9"/>
<dbReference type="SignaLink" id="Q8NEJ9"/>
<dbReference type="BioGRID-ORCS" id="25983">
    <property type="hits" value="464 hits in 1170 CRISPR screens"/>
</dbReference>
<dbReference type="CD-CODE" id="62EA6512">
    <property type="entry name" value="Sam68 nuclear body"/>
</dbReference>
<dbReference type="CD-CODE" id="91857CE7">
    <property type="entry name" value="Nucleolus"/>
</dbReference>
<dbReference type="ChiTaRS" id="NGDN">
    <property type="organism name" value="human"/>
</dbReference>
<dbReference type="GenomeRNAi" id="25983"/>
<dbReference type="Pharos" id="Q8NEJ9">
    <property type="development level" value="Tbio"/>
</dbReference>
<dbReference type="PRO" id="PR:Q8NEJ9"/>
<dbReference type="Proteomes" id="UP000005640">
    <property type="component" value="Chromosome 14"/>
</dbReference>
<dbReference type="RNAct" id="Q8NEJ9">
    <property type="molecule type" value="protein"/>
</dbReference>
<dbReference type="Bgee" id="ENSG00000129460">
    <property type="expression patterns" value="Expressed in oocyte and 210 other cell types or tissues"/>
</dbReference>
<dbReference type="ExpressionAtlas" id="Q8NEJ9">
    <property type="expression patterns" value="baseline and differential"/>
</dbReference>
<dbReference type="GO" id="GO:0030424">
    <property type="term" value="C:axon"/>
    <property type="evidence" value="ECO:0007669"/>
    <property type="project" value="UniProtKB-SubCell"/>
</dbReference>
<dbReference type="GO" id="GO:0000775">
    <property type="term" value="C:chromosome, centromeric region"/>
    <property type="evidence" value="ECO:0007669"/>
    <property type="project" value="UniProtKB-SubCell"/>
</dbReference>
<dbReference type="GO" id="GO:0030425">
    <property type="term" value="C:dendrite"/>
    <property type="evidence" value="ECO:0007669"/>
    <property type="project" value="UniProtKB-SubCell"/>
</dbReference>
<dbReference type="GO" id="GO:0030175">
    <property type="term" value="C:filopodium"/>
    <property type="evidence" value="ECO:0007669"/>
    <property type="project" value="UniProtKB-SubCell"/>
</dbReference>
<dbReference type="GO" id="GO:0005739">
    <property type="term" value="C:mitochondrion"/>
    <property type="evidence" value="ECO:0000314"/>
    <property type="project" value="HPA"/>
</dbReference>
<dbReference type="GO" id="GO:0005730">
    <property type="term" value="C:nucleolus"/>
    <property type="evidence" value="ECO:0000314"/>
    <property type="project" value="HPA"/>
</dbReference>
<dbReference type="GO" id="GO:0005654">
    <property type="term" value="C:nucleoplasm"/>
    <property type="evidence" value="ECO:0000314"/>
    <property type="project" value="HPA"/>
</dbReference>
<dbReference type="GO" id="GO:0032040">
    <property type="term" value="C:small-subunit processome"/>
    <property type="evidence" value="ECO:0000314"/>
    <property type="project" value="UniProtKB"/>
</dbReference>
<dbReference type="GO" id="GO:0003723">
    <property type="term" value="F:RNA binding"/>
    <property type="evidence" value="ECO:0007005"/>
    <property type="project" value="UniProtKB"/>
</dbReference>
<dbReference type="GO" id="GO:0000462">
    <property type="term" value="P:maturation of SSU-rRNA from tricistronic rRNA transcript (SSU-rRNA, 5.8S rRNA, LSU-rRNA)"/>
    <property type="evidence" value="ECO:0000318"/>
    <property type="project" value="GO_Central"/>
</dbReference>
<dbReference type="GO" id="GO:0006417">
    <property type="term" value="P:regulation of translation"/>
    <property type="evidence" value="ECO:0007669"/>
    <property type="project" value="UniProtKB-KW"/>
</dbReference>
<dbReference type="GO" id="GO:0042274">
    <property type="term" value="P:ribosomal small subunit biogenesis"/>
    <property type="evidence" value="ECO:0000314"/>
    <property type="project" value="UniProtKB"/>
</dbReference>
<dbReference type="InterPro" id="IPR007146">
    <property type="entry name" value="Sas10/Utp3/C1D"/>
</dbReference>
<dbReference type="PANTHER" id="PTHR13237:SF9">
    <property type="entry name" value="NEUROGUIDIN"/>
    <property type="match status" value="1"/>
</dbReference>
<dbReference type="PANTHER" id="PTHR13237">
    <property type="entry name" value="SOMETHING ABOUT SILENCING PROTEIN 10-RELATED"/>
    <property type="match status" value="1"/>
</dbReference>
<dbReference type="Pfam" id="PF04000">
    <property type="entry name" value="Sas10_Utp3"/>
    <property type="match status" value="1"/>
</dbReference>